<gene>
    <name type="primary">FCGR3A</name>
    <name type="synonym">FCGR3</name>
</gene>
<feature type="signal peptide" evidence="3">
    <location>
        <begin position="1"/>
        <end position="16"/>
    </location>
</feature>
<feature type="chain" id="PRO_0000015153" description="Low affinity immunoglobulin gamma Fc region receptor III-A">
    <location>
        <begin position="17"/>
        <end position="254"/>
    </location>
</feature>
<feature type="topological domain" description="Extracellular" evidence="3">
    <location>
        <begin position="17"/>
        <end position="208"/>
    </location>
</feature>
<feature type="transmembrane region" description="Helical" evidence="3">
    <location>
        <begin position="209"/>
        <end position="229"/>
    </location>
</feature>
<feature type="topological domain" description="Cytoplasmic" evidence="3">
    <location>
        <begin position="230"/>
        <end position="254"/>
    </location>
</feature>
<feature type="domain" description="Ig-like C2-type 1">
    <location>
        <begin position="24"/>
        <end position="105"/>
    </location>
</feature>
<feature type="domain" description="Ig-like C2-type 2">
    <location>
        <begin position="107"/>
        <end position="189"/>
    </location>
</feature>
<feature type="site" description="Cleavage; by ADAM17" evidence="2">
    <location>
        <begin position="195"/>
        <end position="196"/>
    </location>
</feature>
<feature type="site" description="Important for receptor turnover" evidence="2">
    <location>
        <position position="222"/>
    </location>
</feature>
<feature type="glycosylation site" description="N-linked (GlcNAc...) asparagine" evidence="3">
    <location>
        <position position="56"/>
    </location>
</feature>
<feature type="glycosylation site" description="N-linked (GlcNAc...) asparagine" evidence="3">
    <location>
        <position position="63"/>
    </location>
</feature>
<feature type="glycosylation site" description="N-linked (GlcNAc...) asparagine" evidence="3">
    <location>
        <position position="82"/>
    </location>
</feature>
<feature type="glycosylation site" description="N-linked (GlcNAc...) asparagine" evidence="3">
    <location>
        <position position="180"/>
    </location>
</feature>
<feature type="glycosylation site" description="N-linked (GlcNAc...) asparagine" evidence="3">
    <location>
        <position position="187"/>
    </location>
</feature>
<feature type="disulfide bond" evidence="4">
    <location>
        <begin position="47"/>
        <end position="89"/>
    </location>
</feature>
<feature type="disulfide bond" evidence="4">
    <location>
        <begin position="128"/>
        <end position="172"/>
    </location>
</feature>
<feature type="sequence conflict" description="In Ref. 2; ABD83657." evidence="7" ref="2">
    <original>K</original>
    <variation>R</variation>
    <location>
        <position position="25"/>
    </location>
</feature>
<accession>Q8SPW2</accession>
<accession>Q09TM3</accession>
<organism>
    <name type="scientific">Macaca fascicularis</name>
    <name type="common">Crab-eating macaque</name>
    <name type="synonym">Cynomolgus monkey</name>
    <dbReference type="NCBI Taxonomy" id="9541"/>
    <lineage>
        <taxon>Eukaryota</taxon>
        <taxon>Metazoa</taxon>
        <taxon>Chordata</taxon>
        <taxon>Craniata</taxon>
        <taxon>Vertebrata</taxon>
        <taxon>Euteleostomi</taxon>
        <taxon>Mammalia</taxon>
        <taxon>Eutheria</taxon>
        <taxon>Euarchontoglires</taxon>
        <taxon>Primates</taxon>
        <taxon>Haplorrhini</taxon>
        <taxon>Catarrhini</taxon>
        <taxon>Cercopithecidae</taxon>
        <taxon>Cercopithecinae</taxon>
        <taxon>Macaca</taxon>
    </lineage>
</organism>
<dbReference type="EMBL" id="DQ423377">
    <property type="protein sequence ID" value="ABD83657.1"/>
    <property type="molecule type" value="mRNA"/>
</dbReference>
<dbReference type="EMBL" id="AF485815">
    <property type="protein sequence ID" value="AAL92098.1"/>
    <property type="molecule type" value="mRNA"/>
</dbReference>
<dbReference type="RefSeq" id="NP_001270121.1">
    <property type="nucleotide sequence ID" value="NM_001283192.1"/>
</dbReference>
<dbReference type="SMR" id="Q8SPW2"/>
<dbReference type="STRING" id="9541.ENSMFAP00000023014"/>
<dbReference type="GlyCosmos" id="Q8SPW2">
    <property type="glycosylation" value="5 sites, No reported glycans"/>
</dbReference>
<dbReference type="eggNOG" id="ENOG502RU1M">
    <property type="taxonomic scope" value="Eukaryota"/>
</dbReference>
<dbReference type="Proteomes" id="UP000233100">
    <property type="component" value="Unplaced"/>
</dbReference>
<dbReference type="GO" id="GO:0009897">
    <property type="term" value="C:external side of plasma membrane"/>
    <property type="evidence" value="ECO:0007669"/>
    <property type="project" value="TreeGrafter"/>
</dbReference>
<dbReference type="GO" id="GO:0005615">
    <property type="term" value="C:extracellular space"/>
    <property type="evidence" value="ECO:0000250"/>
    <property type="project" value="UniProtKB"/>
</dbReference>
<dbReference type="GO" id="GO:0005886">
    <property type="term" value="C:plasma membrane"/>
    <property type="evidence" value="ECO:0000250"/>
    <property type="project" value="UniProtKB"/>
</dbReference>
<dbReference type="GO" id="GO:0019864">
    <property type="term" value="F:IgG binding"/>
    <property type="evidence" value="ECO:0007669"/>
    <property type="project" value="UniProtKB-KW"/>
</dbReference>
<dbReference type="GO" id="GO:0019770">
    <property type="term" value="F:IgG receptor activity"/>
    <property type="evidence" value="ECO:0007669"/>
    <property type="project" value="TreeGrafter"/>
</dbReference>
<dbReference type="GO" id="GO:0001788">
    <property type="term" value="P:antibody-dependent cellular cytotoxicity"/>
    <property type="evidence" value="ECO:0000250"/>
    <property type="project" value="UniProtKB"/>
</dbReference>
<dbReference type="GO" id="GO:0019722">
    <property type="term" value="P:calcium-mediated signaling"/>
    <property type="evidence" value="ECO:0000250"/>
    <property type="project" value="UniProtKB"/>
</dbReference>
<dbReference type="GO" id="GO:0038094">
    <property type="term" value="P:Fc-gamma receptor signaling pathway"/>
    <property type="evidence" value="ECO:0000250"/>
    <property type="project" value="UniProtKB"/>
</dbReference>
<dbReference type="GO" id="GO:0030101">
    <property type="term" value="P:natural killer cell activation"/>
    <property type="evidence" value="ECO:0000250"/>
    <property type="project" value="UniProtKB"/>
</dbReference>
<dbReference type="GO" id="GO:0043320">
    <property type="term" value="P:natural killer cell degranulation"/>
    <property type="evidence" value="ECO:0000250"/>
    <property type="project" value="UniProtKB"/>
</dbReference>
<dbReference type="GO" id="GO:0042267">
    <property type="term" value="P:natural killer cell mediated cytotoxicity"/>
    <property type="evidence" value="ECO:0000250"/>
    <property type="project" value="UniProtKB"/>
</dbReference>
<dbReference type="GO" id="GO:0043491">
    <property type="term" value="P:phosphatidylinositol 3-kinase/protein kinase B signal transduction"/>
    <property type="evidence" value="ECO:0000250"/>
    <property type="project" value="UniProtKB"/>
</dbReference>
<dbReference type="CDD" id="cd05752">
    <property type="entry name" value="Ig1_FcgammaR_like"/>
    <property type="match status" value="1"/>
</dbReference>
<dbReference type="CDD" id="cd05753">
    <property type="entry name" value="Ig2_FcgammaR_like"/>
    <property type="match status" value="1"/>
</dbReference>
<dbReference type="FunFam" id="2.60.40.10:FF:000217">
    <property type="entry name" value="High affinity immunoglobulin gamma Fc receptor I"/>
    <property type="match status" value="1"/>
</dbReference>
<dbReference type="FunFam" id="2.60.40.10:FF:000356">
    <property type="entry name" value="Low affinity immunoglobulin gamma Fc region receptor III-A"/>
    <property type="match status" value="1"/>
</dbReference>
<dbReference type="Gene3D" id="2.60.40.10">
    <property type="entry name" value="Immunoglobulins"/>
    <property type="match status" value="2"/>
</dbReference>
<dbReference type="InterPro" id="IPR007110">
    <property type="entry name" value="Ig-like_dom"/>
</dbReference>
<dbReference type="InterPro" id="IPR036179">
    <property type="entry name" value="Ig-like_dom_sf"/>
</dbReference>
<dbReference type="InterPro" id="IPR013783">
    <property type="entry name" value="Ig-like_fold"/>
</dbReference>
<dbReference type="InterPro" id="IPR050488">
    <property type="entry name" value="Ig_Fc_receptor"/>
</dbReference>
<dbReference type="InterPro" id="IPR003599">
    <property type="entry name" value="Ig_sub"/>
</dbReference>
<dbReference type="PANTHER" id="PTHR11481">
    <property type="entry name" value="IMMUNOGLOBULIN FC RECEPTOR"/>
    <property type="match status" value="1"/>
</dbReference>
<dbReference type="PANTHER" id="PTHR11481:SF103">
    <property type="entry name" value="LOW AFFINITY IMMUNOGLOBULIN GAMMA FC REGION RECEPTOR III-A-RELATED"/>
    <property type="match status" value="1"/>
</dbReference>
<dbReference type="Pfam" id="PF13895">
    <property type="entry name" value="Ig_2"/>
    <property type="match status" value="2"/>
</dbReference>
<dbReference type="SMART" id="SM00409">
    <property type="entry name" value="IG"/>
    <property type="match status" value="2"/>
</dbReference>
<dbReference type="SUPFAM" id="SSF48726">
    <property type="entry name" value="Immunoglobulin"/>
    <property type="match status" value="2"/>
</dbReference>
<dbReference type="PROSITE" id="PS50835">
    <property type="entry name" value="IG_LIKE"/>
    <property type="match status" value="2"/>
</dbReference>
<sequence>MWQLLLPTALLLLVSAGMRAEDLPKAVVFLEPQWYRVLEKDRVTLKCQGAYSPEDNSTRWFHNESLISSQTSSYFIAAARVNNSGEYRCQTSLSTLSDPVQLEVHIGWLLLQAPRWVFKEEESIHLRCHSWKNTLLHKVTYLQNGKGRKYFHQNSDFYIPKATLKDSGSYFCRGLIGSKNVSSETVNITITQDLAVSSISSFFPPGYQVSFCLVMVLLFAVDTGLYFSMKKSIPSSTRDWEDHKFKWSKDPQDK</sequence>
<comment type="function">
    <text evidence="2">Receptor for the invariable Fc fragment of immunoglobulin gamma (IgG). Optimally activated upon binding of clustered antigen-IgG complexes displayed on cell surfaces, triggers lysis of antibody-coated cells, a process known as antibody-dependent cellular cytotoxicity (ADCC). Does not bind free monomeric IgG, thus avoiding inappropriate effector cell activation in the absence of antigenic trigger (By similarity). Mediates IgG effector functions on natural killer (NK) cells. Binds antigen-IgG complexes generated upon infection and triggers NK cell-dependent cytokine production and degranulation to limit viral load and propagation. Involved in the generation of memory-like adaptive NK cells capable to produce high amounts of IFNG and to efficiently eliminate virus-infected cells via ADCC. Regulates NK cell survival and proliferation, in particular by preventing NK cell progenitor apoptosis (By similarity). Fc-binding subunit that associates with CD247 and/or FCER1G adapters to form functional signaling complexes. Following the engagement of antigen-IgG complexes, triggers phosphorylation of immunoreceptor tyrosine-based activation motif (ITAM)-containing adapters with subsequent activation of phosphatidylinositol 3-kinase signaling and sustained elevation of intracellular calcium that ultimately drive NK cell activation. The ITAM-dependent signaling coupled to receptor phosphorylation by PKC mediates robust intracellular calcium flux that leads to production of pro-inflammatory cytokines, whereas in the absence of receptor phosphorylation it mainly activates phosphatidylinositol 3-kinase signaling leading to cell degranulation (By similarity). Costimulates NK cells and trigger lysis of target cells independently of IgG binding (By similarity). Mediates the antitumor activities of therapeutic antibodies. Upon ligation on monocytes triggers TNFA-dependent ADCC of IgG-coated tumor cells (By similarity). Mediates enhanced ADCC in response to afucosylated IgGs (By similarity).</text>
</comment>
<comment type="subunit">
    <text evidence="2">Forms a heterooligomeric complex with ITAM-containing signaling subunits, either a homodimer of CD247, a homodimer of FCER1G or a heterodimer of CD247 and FCER1G. Interacts (via transmembrane domain) with signaling subunits; this interaction is a prerequisite for receptor complex expression on the cell surface and intracellular signal transduction. Binds the Fc region of antigen-complexed IgG with a preference for IgG1 and IgG3 isotypes (By similarity). Interacts with CD2; this interaction is involved in NK cell activation and cytotoxicity (By similarity). Interacts with S100A4; this interaction inhibits PKC-dependent phosphorylation of FCGR3A (By similarity).</text>
</comment>
<comment type="subcellular location">
    <subcellularLocation>
        <location evidence="2">Cell membrane</location>
        <topology evidence="3">Single-pass type I membrane protein</topology>
    </subcellularLocation>
    <subcellularLocation>
        <location evidence="2">Secreted</location>
    </subcellularLocation>
    <text evidence="2">Also exists as a soluble receptor.</text>
</comment>
<comment type="tissue specificity">
    <text evidence="5">Lymphocytes and monocytes.</text>
</comment>
<comment type="PTM">
    <text evidence="2">Glycosylated. Glycosylation plays an inhibitory role in the interaction with IgG1 and IgG2.</text>
</comment>
<comment type="PTM">
    <text evidence="2">Undergoes rapid ectodomain shedding upon NK cell stimulation. The soluble form is produced by a proteolytic cleavage mediated by ADAM17. Repeated stimulation causes receptor shedding, a mechanism that allows for increased NK cell motility and detachment from opsonized target cells while avoiding activation-induced NK cell apoptosis.</text>
</comment>
<reference key="1">
    <citation type="journal article" date="2006" name="J. Immunol.">
        <title>IgG Fc receptor III homologues in nonhuman primate species: genetic characterization and ligand interactions.</title>
        <authorList>
            <person name="Rogers K.A."/>
            <person name="Scinicariello F."/>
            <person name="Attanasio R."/>
        </authorList>
    </citation>
    <scope>NUCLEOTIDE SEQUENCE [MRNA]</scope>
    <scope>TISSUE SPECIFICITY</scope>
    <source>
        <tissue>Blood</tissue>
    </source>
</reference>
<reference key="2">
    <citation type="submission" date="2002-02" db="EMBL/GenBank/DDBJ databases">
        <title>Binding of human IgG to cynomolgus FcR.</title>
        <authorList>
            <person name="Namenuk A.K."/>
            <person name="Hong K."/>
            <person name="Meng Y.G."/>
            <person name="Shields R.L."/>
            <person name="Cromwell M.E.M."/>
            <person name="Presta L.G."/>
        </authorList>
    </citation>
    <scope>NUCLEOTIDE SEQUENCE [MRNA]</scope>
    <source>
        <tissue>Spleen</tissue>
    </source>
</reference>
<reference key="3">
    <citation type="journal article" date="1994" name="Bull. World Health Organ.">
        <title>Nomenclature of Fc receptors. IUIS/WHO Subcommittee on Nomenclature of Fc receptors.</title>
        <authorList>
            <person name="Conrad D."/>
            <person name="Cooper M."/>
            <person name="Fridman W.H."/>
            <person name="Kinet J.P."/>
            <person name="Ravetch J."/>
        </authorList>
    </citation>
    <scope>NOMENCLATURE</scope>
</reference>
<name>FCG3A_MACFA</name>
<proteinExistence type="evidence at transcript level"/>
<evidence type="ECO:0000250" key="1">
    <source>
        <dbReference type="UniProtKB" id="A3RFZ7"/>
    </source>
</evidence>
<evidence type="ECO:0000250" key="2">
    <source>
        <dbReference type="UniProtKB" id="P08637"/>
    </source>
</evidence>
<evidence type="ECO:0000255" key="3"/>
<evidence type="ECO:0000255" key="4">
    <source>
        <dbReference type="PROSITE-ProRule" id="PRU00114"/>
    </source>
</evidence>
<evidence type="ECO:0000269" key="5">
    <source>
    </source>
</evidence>
<evidence type="ECO:0000303" key="6">
    <source>
    </source>
</evidence>
<evidence type="ECO:0000305" key="7"/>
<keyword id="KW-1003">Cell membrane</keyword>
<keyword id="KW-1015">Disulfide bond</keyword>
<keyword id="KW-0325">Glycoprotein</keyword>
<keyword id="KW-0390">IgG-binding protein</keyword>
<keyword id="KW-0391">Immunity</keyword>
<keyword id="KW-0393">Immunoglobulin domain</keyword>
<keyword id="KW-0472">Membrane</keyword>
<keyword id="KW-0675">Receptor</keyword>
<keyword id="KW-1185">Reference proteome</keyword>
<keyword id="KW-0677">Repeat</keyword>
<keyword id="KW-0964">Secreted</keyword>
<keyword id="KW-0732">Signal</keyword>
<keyword id="KW-0812">Transmembrane</keyword>
<keyword id="KW-1133">Transmembrane helix</keyword>
<protein>
    <recommendedName>
        <fullName evidence="2">Low affinity immunoglobulin gamma Fc region receptor III-A</fullName>
        <shortName>IgG Fc receptor III-A</shortName>
    </recommendedName>
    <alternativeName>
        <fullName>Fc-gamma RIII-alpha</fullName>
        <shortName>Fc-gamma RIII</shortName>
        <shortName>Fc-gamma RIIIa</shortName>
        <shortName evidence="1">FcgammaRIIIa</shortName>
    </alternativeName>
    <cdAntigenName evidence="6">CD16a</cdAntigenName>
</protein>